<name>CYB_NEOVI</name>
<proteinExistence type="inferred from homology"/>
<organism>
    <name type="scientific">Neovison vison</name>
    <name type="common">American mink</name>
    <name type="synonym">Mustela vison</name>
    <dbReference type="NCBI Taxonomy" id="452646"/>
    <lineage>
        <taxon>Eukaryota</taxon>
        <taxon>Metazoa</taxon>
        <taxon>Chordata</taxon>
        <taxon>Craniata</taxon>
        <taxon>Vertebrata</taxon>
        <taxon>Euteleostomi</taxon>
        <taxon>Mammalia</taxon>
        <taxon>Eutheria</taxon>
        <taxon>Laurasiatheria</taxon>
        <taxon>Carnivora</taxon>
        <taxon>Caniformia</taxon>
        <taxon>Musteloidea</taxon>
        <taxon>Mustelidae</taxon>
        <taxon>Mustelinae</taxon>
        <taxon>Neogale</taxon>
    </lineage>
</organism>
<accession>Q35113</accession>
<feature type="chain" id="PRO_0000061227" description="Cytochrome b">
    <location>
        <begin position="1"/>
        <end position="379"/>
    </location>
</feature>
<feature type="transmembrane region" description="Helical" evidence="2">
    <location>
        <begin position="33"/>
        <end position="53"/>
    </location>
</feature>
<feature type="transmembrane region" description="Helical" evidence="2">
    <location>
        <begin position="77"/>
        <end position="98"/>
    </location>
</feature>
<feature type="transmembrane region" description="Helical" evidence="2">
    <location>
        <begin position="113"/>
        <end position="133"/>
    </location>
</feature>
<feature type="transmembrane region" description="Helical" evidence="2">
    <location>
        <begin position="178"/>
        <end position="198"/>
    </location>
</feature>
<feature type="transmembrane region" description="Helical" evidence="2">
    <location>
        <begin position="226"/>
        <end position="246"/>
    </location>
</feature>
<feature type="transmembrane region" description="Helical" evidence="2">
    <location>
        <begin position="288"/>
        <end position="308"/>
    </location>
</feature>
<feature type="transmembrane region" description="Helical" evidence="2">
    <location>
        <begin position="320"/>
        <end position="340"/>
    </location>
</feature>
<feature type="transmembrane region" description="Helical" evidence="2">
    <location>
        <begin position="347"/>
        <end position="367"/>
    </location>
</feature>
<feature type="binding site" description="axial binding residue" evidence="2">
    <location>
        <position position="83"/>
    </location>
    <ligand>
        <name>heme b</name>
        <dbReference type="ChEBI" id="CHEBI:60344"/>
        <label>b562</label>
    </ligand>
    <ligandPart>
        <name>Fe</name>
        <dbReference type="ChEBI" id="CHEBI:18248"/>
    </ligandPart>
</feature>
<feature type="binding site" description="axial binding residue" evidence="2">
    <location>
        <position position="97"/>
    </location>
    <ligand>
        <name>heme b</name>
        <dbReference type="ChEBI" id="CHEBI:60344"/>
        <label>b566</label>
    </ligand>
    <ligandPart>
        <name>Fe</name>
        <dbReference type="ChEBI" id="CHEBI:18248"/>
    </ligandPart>
</feature>
<feature type="binding site" description="axial binding residue" evidence="2">
    <location>
        <position position="182"/>
    </location>
    <ligand>
        <name>heme b</name>
        <dbReference type="ChEBI" id="CHEBI:60344"/>
        <label>b562</label>
    </ligand>
    <ligandPart>
        <name>Fe</name>
        <dbReference type="ChEBI" id="CHEBI:18248"/>
    </ligandPart>
</feature>
<feature type="binding site" description="axial binding residue" evidence="2">
    <location>
        <position position="196"/>
    </location>
    <ligand>
        <name>heme b</name>
        <dbReference type="ChEBI" id="CHEBI:60344"/>
        <label>b566</label>
    </ligand>
    <ligandPart>
        <name>Fe</name>
        <dbReference type="ChEBI" id="CHEBI:18248"/>
    </ligandPart>
</feature>
<feature type="binding site" evidence="2">
    <location>
        <position position="201"/>
    </location>
    <ligand>
        <name>a ubiquinone</name>
        <dbReference type="ChEBI" id="CHEBI:16389"/>
    </ligand>
</feature>
<evidence type="ECO:0000250" key="1"/>
<evidence type="ECO:0000250" key="2">
    <source>
        <dbReference type="UniProtKB" id="P00157"/>
    </source>
</evidence>
<evidence type="ECO:0000255" key="3">
    <source>
        <dbReference type="PROSITE-ProRule" id="PRU00967"/>
    </source>
</evidence>
<evidence type="ECO:0000255" key="4">
    <source>
        <dbReference type="PROSITE-ProRule" id="PRU00968"/>
    </source>
</evidence>
<keyword id="KW-0249">Electron transport</keyword>
<keyword id="KW-0349">Heme</keyword>
<keyword id="KW-0408">Iron</keyword>
<keyword id="KW-0472">Membrane</keyword>
<keyword id="KW-0479">Metal-binding</keyword>
<keyword id="KW-0496">Mitochondrion</keyword>
<keyword id="KW-0999">Mitochondrion inner membrane</keyword>
<keyword id="KW-1185">Reference proteome</keyword>
<keyword id="KW-0679">Respiratory chain</keyword>
<keyword id="KW-0812">Transmembrane</keyword>
<keyword id="KW-1133">Transmembrane helix</keyword>
<keyword id="KW-0813">Transport</keyword>
<keyword id="KW-0830">Ubiquinone</keyword>
<geneLocation type="mitochondrion"/>
<dbReference type="EMBL" id="AF057129">
    <property type="protein sequence ID" value="AAC33709.1"/>
    <property type="molecule type" value="Genomic_DNA"/>
</dbReference>
<dbReference type="EMBL" id="D26517">
    <property type="protein sequence ID" value="BAA05523.1"/>
    <property type="molecule type" value="Genomic_DNA"/>
</dbReference>
<dbReference type="EMBL" id="AF068548">
    <property type="protein sequence ID" value="AAC24853.1"/>
    <property type="molecule type" value="Genomic_DNA"/>
</dbReference>
<dbReference type="RefSeq" id="YP_007625301.1">
    <property type="nucleotide sequence ID" value="NC_020641.1"/>
</dbReference>
<dbReference type="SMR" id="Q35113"/>
<dbReference type="Ensembl" id="ENSNVIT00000034894.1">
    <property type="protein sequence ID" value="ENSNVIP00000032504.1"/>
    <property type="gene ID" value="ENSNVIG00000022769.1"/>
</dbReference>
<dbReference type="GeneID" id="14841851"/>
<dbReference type="KEGG" id="nvs:14841851"/>
<dbReference type="CTD" id="4519"/>
<dbReference type="GeneTree" id="ENSGT00390000017948"/>
<dbReference type="OrthoDB" id="15293at33554"/>
<dbReference type="Proteomes" id="UP000694425">
    <property type="component" value="Unplaced"/>
</dbReference>
<dbReference type="GO" id="GO:0005743">
    <property type="term" value="C:mitochondrial inner membrane"/>
    <property type="evidence" value="ECO:0007669"/>
    <property type="project" value="UniProtKB-SubCell"/>
</dbReference>
<dbReference type="GO" id="GO:0045275">
    <property type="term" value="C:respiratory chain complex III"/>
    <property type="evidence" value="ECO:0007669"/>
    <property type="project" value="InterPro"/>
</dbReference>
<dbReference type="GO" id="GO:0046872">
    <property type="term" value="F:metal ion binding"/>
    <property type="evidence" value="ECO:0007669"/>
    <property type="project" value="UniProtKB-KW"/>
</dbReference>
<dbReference type="GO" id="GO:0008121">
    <property type="term" value="F:ubiquinol-cytochrome-c reductase activity"/>
    <property type="evidence" value="ECO:0007669"/>
    <property type="project" value="InterPro"/>
</dbReference>
<dbReference type="GO" id="GO:0006122">
    <property type="term" value="P:mitochondrial electron transport, ubiquinol to cytochrome c"/>
    <property type="evidence" value="ECO:0007669"/>
    <property type="project" value="TreeGrafter"/>
</dbReference>
<dbReference type="CDD" id="cd00290">
    <property type="entry name" value="cytochrome_b_C"/>
    <property type="match status" value="1"/>
</dbReference>
<dbReference type="CDD" id="cd00284">
    <property type="entry name" value="Cytochrome_b_N"/>
    <property type="match status" value="1"/>
</dbReference>
<dbReference type="FunFam" id="1.20.810.10:FF:000002">
    <property type="entry name" value="Cytochrome b"/>
    <property type="match status" value="1"/>
</dbReference>
<dbReference type="Gene3D" id="1.20.810.10">
    <property type="entry name" value="Cytochrome Bc1 Complex, Chain C"/>
    <property type="match status" value="1"/>
</dbReference>
<dbReference type="InterPro" id="IPR005798">
    <property type="entry name" value="Cyt_b/b6_C"/>
</dbReference>
<dbReference type="InterPro" id="IPR036150">
    <property type="entry name" value="Cyt_b/b6_C_sf"/>
</dbReference>
<dbReference type="InterPro" id="IPR005797">
    <property type="entry name" value="Cyt_b/b6_N"/>
</dbReference>
<dbReference type="InterPro" id="IPR027387">
    <property type="entry name" value="Cytb/b6-like_sf"/>
</dbReference>
<dbReference type="InterPro" id="IPR030689">
    <property type="entry name" value="Cytochrome_b"/>
</dbReference>
<dbReference type="InterPro" id="IPR048260">
    <property type="entry name" value="Cytochrome_b_C_euk/bac"/>
</dbReference>
<dbReference type="InterPro" id="IPR048259">
    <property type="entry name" value="Cytochrome_b_N_euk/bac"/>
</dbReference>
<dbReference type="InterPro" id="IPR016174">
    <property type="entry name" value="Di-haem_cyt_TM"/>
</dbReference>
<dbReference type="PANTHER" id="PTHR19271">
    <property type="entry name" value="CYTOCHROME B"/>
    <property type="match status" value="1"/>
</dbReference>
<dbReference type="PANTHER" id="PTHR19271:SF16">
    <property type="entry name" value="CYTOCHROME B"/>
    <property type="match status" value="1"/>
</dbReference>
<dbReference type="Pfam" id="PF00032">
    <property type="entry name" value="Cytochrom_B_C"/>
    <property type="match status" value="1"/>
</dbReference>
<dbReference type="Pfam" id="PF00033">
    <property type="entry name" value="Cytochrome_B"/>
    <property type="match status" value="1"/>
</dbReference>
<dbReference type="PIRSF" id="PIRSF038885">
    <property type="entry name" value="COB"/>
    <property type="match status" value="1"/>
</dbReference>
<dbReference type="SUPFAM" id="SSF81648">
    <property type="entry name" value="a domain/subunit of cytochrome bc1 complex (Ubiquinol-cytochrome c reductase)"/>
    <property type="match status" value="1"/>
</dbReference>
<dbReference type="SUPFAM" id="SSF81342">
    <property type="entry name" value="Transmembrane di-heme cytochromes"/>
    <property type="match status" value="1"/>
</dbReference>
<dbReference type="PROSITE" id="PS51003">
    <property type="entry name" value="CYTB_CTER"/>
    <property type="match status" value="1"/>
</dbReference>
<dbReference type="PROSITE" id="PS51002">
    <property type="entry name" value="CYTB_NTER"/>
    <property type="match status" value="1"/>
</dbReference>
<comment type="function">
    <text evidence="2">Component of the ubiquinol-cytochrome c reductase complex (complex III or cytochrome b-c1 complex) that is part of the mitochondrial respiratory chain. The b-c1 complex mediates electron transfer from ubiquinol to cytochrome c. Contributes to the generation of a proton gradient across the mitochondrial membrane that is then used for ATP synthesis.</text>
</comment>
<comment type="cofactor">
    <cofactor evidence="2">
        <name>heme b</name>
        <dbReference type="ChEBI" id="CHEBI:60344"/>
    </cofactor>
    <text evidence="2">Binds 2 heme b groups non-covalently.</text>
</comment>
<comment type="subunit">
    <text evidence="2">The cytochrome bc1 complex contains 11 subunits: 3 respiratory subunits (MT-CYB, CYC1 and UQCRFS1), 2 core proteins (UQCRC1 and UQCRC2) and 6 low-molecular weight proteins (UQCRH/QCR6, UQCRB/QCR7, UQCRQ/QCR8, UQCR10/QCR9, UQCR11/QCR10 and a cleavage product of UQCRFS1). This cytochrome bc1 complex then forms a dimer.</text>
</comment>
<comment type="subcellular location">
    <subcellularLocation>
        <location evidence="2">Mitochondrion inner membrane</location>
        <topology evidence="2">Multi-pass membrane protein</topology>
    </subcellularLocation>
</comment>
<comment type="miscellaneous">
    <text evidence="1">Heme 1 (or BL or b562) is low-potential and absorbs at about 562 nm, and heme 2 (or BH or b566) is high-potential and absorbs at about 566 nm.</text>
</comment>
<comment type="similarity">
    <text evidence="3 4">Belongs to the cytochrome b family.</text>
</comment>
<comment type="caution">
    <text evidence="2">The full-length protein contains only eight transmembrane helices, not nine as predicted by bioinformatics tools.</text>
</comment>
<gene>
    <name type="primary">MT-CYB</name>
    <name type="synonym">COB</name>
    <name type="synonym">CYTB</name>
    <name type="synonym">MTCYB</name>
</gene>
<protein>
    <recommendedName>
        <fullName>Cytochrome b</fullName>
    </recommendedName>
    <alternativeName>
        <fullName>Complex III subunit 3</fullName>
    </alternativeName>
    <alternativeName>
        <fullName>Complex III subunit III</fullName>
    </alternativeName>
    <alternativeName>
        <fullName>Cytochrome b-c1 complex subunit 3</fullName>
    </alternativeName>
    <alternativeName>
        <fullName>Ubiquinol-cytochrome-c reductase complex cytochrome b subunit</fullName>
    </alternativeName>
</protein>
<sequence length="379" mass="42675">MTNIRKTHPLTKIINNSFIDLPAPSNISAWWNFGSLLGICLILQILTGLFLAMHYTSDTATAFSSVTHICRDVNYGWIIRYMHANGASMFFVCLFLHVGRGLYYGSYMFPETWNIGIILLFTVMATAFMGYVLPWGQMSFWGATVITNLLSAIPYIGTNLVEWIWGGFSVDKATLTRFFAFHFILPFVISALAAVHLLFLHETGSNNPSGIPSDSDKIPFHPYYTIKDILGALFLILTLTLLVLFSPDLLGDPDNYIPANPLNTPPHIKPEWYFLFAYAILRSIPNKLGGVLALVFSILVLAIIPLLHTSKQRSMMFRPLSQCLFWLLVADLLTLTWIGGQPVEHPFITIGQLASILYFMILLVFMPIVSIIENNLLKW</sequence>
<reference key="1">
    <citation type="journal article" date="1998" name="J. Zool. (Lond.)">
        <title>Phylogenetic relationships of otters (Carnivora: Mustelidae) based on mitochondrial cytochrome b sequences.</title>
        <authorList>
            <person name="Koepfli K.-P."/>
            <person name="Wayne R.K."/>
        </authorList>
    </citation>
    <scope>NUCLEOTIDE SEQUENCE [GENOMIC DNA]</scope>
</reference>
<reference key="2">
    <citation type="journal article" date="1994" name="Zool. Sci.">
        <title>A molecular phylogeny of the family Mustelidae (Mammalia, Carnivora), based on comparison of mitochondrial cytochrome b nucleotide sequences.</title>
        <authorList>
            <person name="Masuda R."/>
            <person name="Yoshida M.C."/>
        </authorList>
    </citation>
    <scope>NUCLEOTIDE SEQUENCE [GENOMIC DNA] OF 1-125</scope>
    <source>
        <tissue>Muscle</tissue>
    </source>
</reference>
<reference key="3">
    <citation type="journal article" date="1998" name="Biol. Conserv.">
        <title>Hybridization and the phylogenetic relationship between polecats and domestic ferrets in Britain.</title>
        <authorList>
            <person name="Davison A."/>
            <person name="Birks J.D.S."/>
            <person name="Griffiths H.I."/>
            <person name="Kitchener A.C."/>
            <person name="Biggins D."/>
            <person name="Butlin R.K."/>
        </authorList>
    </citation>
    <scope>NUCLEOTIDE SEQUENCE [GENOMIC DNA] OF 14-125</scope>
    <source>
        <strain>C15</strain>
    </source>
</reference>